<accession>Q5ZE00</accession>
<accession>A0A0P0UXP3</accession>
<accession>Q0JR14</accession>
<evidence type="ECO:0000250" key="1">
    <source>
        <dbReference type="UniProtKB" id="F4I4K5"/>
    </source>
</evidence>
<evidence type="ECO:0000250" key="2">
    <source>
        <dbReference type="UniProtKB" id="P37064"/>
    </source>
</evidence>
<evidence type="ECO:0000255" key="3"/>
<evidence type="ECO:0000255" key="4">
    <source>
        <dbReference type="PROSITE-ProRule" id="PRU00498"/>
    </source>
</evidence>
<evidence type="ECO:0000269" key="5">
    <source>
    </source>
</evidence>
<evidence type="ECO:0000303" key="6">
    <source>
    </source>
</evidence>
<evidence type="ECO:0000305" key="7"/>
<evidence type="ECO:0000305" key="8">
    <source>
    </source>
</evidence>
<evidence type="ECO:0000312" key="9">
    <source>
        <dbReference type="EMBL" id="BAD52544.1"/>
    </source>
</evidence>
<evidence type="ECO:0000312" key="10">
    <source>
        <dbReference type="EMBL" id="BAF03814.2"/>
    </source>
</evidence>
<gene>
    <name evidence="6" type="primary">LPR3</name>
    <name evidence="10" type="ordered locus">Os01g0127000</name>
    <name evidence="7" type="ordered locus">LOC_Os01g03630</name>
    <name evidence="9" type="ORF">P0409B08.15</name>
</gene>
<keyword id="KW-0186">Copper</keyword>
<keyword id="KW-0256">Endoplasmic reticulum</keyword>
<keyword id="KW-0325">Glycoprotein</keyword>
<keyword id="KW-0472">Membrane</keyword>
<keyword id="KW-0479">Metal-binding</keyword>
<keyword id="KW-0560">Oxidoreductase</keyword>
<keyword id="KW-1185">Reference proteome</keyword>
<keyword id="KW-0732">Signal</keyword>
<protein>
    <recommendedName>
        <fullName evidence="7">Multicopper oxidase LPR1 homolog 3</fullName>
        <ecNumber evidence="7">1.-.-.-</ecNumber>
    </recommendedName>
</protein>
<feature type="signal peptide" evidence="7">
    <location>
        <begin position="1"/>
        <end status="unknown"/>
    </location>
</feature>
<feature type="chain" id="PRO_0000439060" description="Multicopper oxidase LPR1 homolog 3">
    <location>
        <begin status="unknown"/>
        <end position="534"/>
    </location>
</feature>
<feature type="domain" description="Plastocyanin-like" evidence="3">
    <location>
        <begin position="219"/>
        <end position="291"/>
    </location>
</feature>
<feature type="binding site" description="type 2 copper site" evidence="2">
    <location>
        <position position="84"/>
    </location>
    <ligand>
        <name>Cu cation</name>
        <dbReference type="ChEBI" id="CHEBI:23378"/>
        <label>1</label>
    </ligand>
</feature>
<feature type="binding site" description="type 3 copper site" evidence="2">
    <location>
        <position position="86"/>
    </location>
    <ligand>
        <name>Cu cation</name>
        <dbReference type="ChEBI" id="CHEBI:23378"/>
        <label>2</label>
    </ligand>
</feature>
<feature type="binding site" description="type 3 copper site" evidence="2">
    <location>
        <position position="133"/>
    </location>
    <ligand>
        <name>Cu cation</name>
        <dbReference type="ChEBI" id="CHEBI:23378"/>
        <label>2</label>
    </ligand>
</feature>
<feature type="binding site" description="type 3 copper site" evidence="2">
    <location>
        <position position="135"/>
    </location>
    <ligand>
        <name>Cu cation</name>
        <dbReference type="ChEBI" id="CHEBI:23378"/>
        <label>3</label>
    </ligand>
</feature>
<feature type="binding site" description="type 1 copper site" evidence="2">
    <location>
        <position position="419"/>
    </location>
    <ligand>
        <name>Cu cation</name>
        <dbReference type="ChEBI" id="CHEBI:23378"/>
        <label>4</label>
    </ligand>
</feature>
<feature type="binding site" description="type 2 copper site" evidence="2">
    <location>
        <position position="422"/>
    </location>
    <ligand>
        <name>Cu cation</name>
        <dbReference type="ChEBI" id="CHEBI:23378"/>
        <label>1</label>
    </ligand>
</feature>
<feature type="binding site" description="type 3 copper site" evidence="2">
    <location>
        <position position="424"/>
    </location>
    <ligand>
        <name>Cu cation</name>
        <dbReference type="ChEBI" id="CHEBI:23378"/>
        <label>3</label>
    </ligand>
</feature>
<feature type="binding site" description="type 3 copper site" evidence="2">
    <location>
        <position position="515"/>
    </location>
    <ligand>
        <name>Cu cation</name>
        <dbReference type="ChEBI" id="CHEBI:23378"/>
        <label>3</label>
    </ligand>
</feature>
<feature type="binding site" description="type 1 copper site" evidence="2">
    <location>
        <position position="516"/>
    </location>
    <ligand>
        <name>Cu cation</name>
        <dbReference type="ChEBI" id="CHEBI:23378"/>
        <label>4</label>
    </ligand>
</feature>
<feature type="binding site" description="type 3 copper site" evidence="2">
    <location>
        <position position="517"/>
    </location>
    <ligand>
        <name>Cu cation</name>
        <dbReference type="ChEBI" id="CHEBI:23378"/>
        <label>2</label>
    </ligand>
</feature>
<feature type="binding site" description="type 1 copper site" evidence="2">
    <location>
        <position position="521"/>
    </location>
    <ligand>
        <name>Cu cation</name>
        <dbReference type="ChEBI" id="CHEBI:23378"/>
        <label>4</label>
    </ligand>
</feature>
<feature type="binding site" description="type 1 copper site" evidence="2">
    <location>
        <position position="526"/>
    </location>
    <ligand>
        <name>Cu cation</name>
        <dbReference type="ChEBI" id="CHEBI:23378"/>
        <label>4</label>
    </ligand>
</feature>
<feature type="glycosylation site" description="N-linked (GlcNAc...) asparagine" evidence="4">
    <location>
        <position position="109"/>
    </location>
</feature>
<feature type="glycosylation site" description="N-linked (GlcNAc...) asparagine" evidence="4">
    <location>
        <position position="234"/>
    </location>
</feature>
<feature type="glycosylation site" description="N-linked (GlcNAc...) asparagine" evidence="4">
    <location>
        <position position="291"/>
    </location>
</feature>
<feature type="glycosylation site" description="N-linked (GlcNAc...) asparagine" evidence="4">
    <location>
        <position position="312"/>
    </location>
</feature>
<feature type="glycosylation site" description="N-linked (GlcNAc...) asparagine" evidence="4">
    <location>
        <position position="323"/>
    </location>
</feature>
<feature type="glycosylation site" description="N-linked (GlcNAc...) asparagine" evidence="4">
    <location>
        <position position="341"/>
    </location>
</feature>
<feature type="glycosylation site" description="N-linked (GlcNAc...) asparagine" evidence="4">
    <location>
        <position position="372"/>
    </location>
</feature>
<feature type="glycosylation site" description="N-linked (GlcNAc...) asparagine" evidence="4">
    <location>
        <position position="450"/>
    </location>
</feature>
<dbReference type="EC" id="1.-.-.-" evidence="7"/>
<dbReference type="EMBL" id="AP002860">
    <property type="protein sequence ID" value="BAD52544.1"/>
    <property type="status" value="ALT_INIT"/>
    <property type="molecule type" value="Genomic_DNA"/>
</dbReference>
<dbReference type="EMBL" id="AP008207">
    <property type="protein sequence ID" value="BAF03814.2"/>
    <property type="status" value="ALT_INIT"/>
    <property type="molecule type" value="Genomic_DNA"/>
</dbReference>
<dbReference type="EMBL" id="AP014957">
    <property type="protein sequence ID" value="BAS70180.1"/>
    <property type="status" value="ALT_INIT"/>
    <property type="molecule type" value="Genomic_DNA"/>
</dbReference>
<dbReference type="SMR" id="Q5ZE00"/>
<dbReference type="STRING" id="39947.Q5ZE00"/>
<dbReference type="GlyCosmos" id="Q5ZE00">
    <property type="glycosylation" value="8 sites, No reported glycans"/>
</dbReference>
<dbReference type="PaxDb" id="39947-Q5ZE00"/>
<dbReference type="EnsemblPlants" id="Os01t0127000-01">
    <property type="protein sequence ID" value="Os01t0127000-01"/>
    <property type="gene ID" value="Os01g0127000"/>
</dbReference>
<dbReference type="Gramene" id="Os01t0127000-01">
    <property type="protein sequence ID" value="Os01t0127000-01"/>
    <property type="gene ID" value="Os01g0127000"/>
</dbReference>
<dbReference type="KEGG" id="dosa:Os01g0127000"/>
<dbReference type="eggNOG" id="ENOG502QR4X">
    <property type="taxonomic scope" value="Eukaryota"/>
</dbReference>
<dbReference type="HOGENOM" id="CLU_009100_4_2_1"/>
<dbReference type="InParanoid" id="Q5ZE00"/>
<dbReference type="Proteomes" id="UP000000763">
    <property type="component" value="Chromosome 1"/>
</dbReference>
<dbReference type="Proteomes" id="UP000059680">
    <property type="component" value="Chromosome 1"/>
</dbReference>
<dbReference type="GO" id="GO:0005789">
    <property type="term" value="C:endoplasmic reticulum membrane"/>
    <property type="evidence" value="ECO:0007669"/>
    <property type="project" value="UniProtKB-SubCell"/>
</dbReference>
<dbReference type="GO" id="GO:0005507">
    <property type="term" value="F:copper ion binding"/>
    <property type="evidence" value="ECO:0007669"/>
    <property type="project" value="InterPro"/>
</dbReference>
<dbReference type="GO" id="GO:0016491">
    <property type="term" value="F:oxidoreductase activity"/>
    <property type="evidence" value="ECO:0000318"/>
    <property type="project" value="GO_Central"/>
</dbReference>
<dbReference type="GO" id="GO:0016036">
    <property type="term" value="P:cellular response to phosphate starvation"/>
    <property type="evidence" value="ECO:0007669"/>
    <property type="project" value="InterPro"/>
</dbReference>
<dbReference type="CDD" id="cd13844">
    <property type="entry name" value="CuRO_1_BOD_CotA_like"/>
    <property type="match status" value="1"/>
</dbReference>
<dbReference type="CDD" id="cd13868">
    <property type="entry name" value="CuRO_2_CotA_like"/>
    <property type="match status" value="1"/>
</dbReference>
<dbReference type="Gene3D" id="2.60.40.420">
    <property type="entry name" value="Cupredoxins - blue copper proteins"/>
    <property type="match status" value="3"/>
</dbReference>
<dbReference type="InterPro" id="IPR011707">
    <property type="entry name" value="Cu-oxidase-like_N"/>
</dbReference>
<dbReference type="InterPro" id="IPR001117">
    <property type="entry name" value="Cu-oxidase_2nd"/>
</dbReference>
<dbReference type="InterPro" id="IPR011706">
    <property type="entry name" value="Cu-oxidase_C"/>
</dbReference>
<dbReference type="InterPro" id="IPR002355">
    <property type="entry name" value="Cu_oxidase_Cu_BS"/>
</dbReference>
<dbReference type="InterPro" id="IPR008972">
    <property type="entry name" value="Cupredoxin"/>
</dbReference>
<dbReference type="InterPro" id="IPR052152">
    <property type="entry name" value="LPR1/LPR2"/>
</dbReference>
<dbReference type="PANTHER" id="PTHR48461">
    <property type="entry name" value="MULTICOPPER OXIDASE LPR1-LIKE"/>
    <property type="match status" value="1"/>
</dbReference>
<dbReference type="PANTHER" id="PTHR48461:SF1">
    <property type="entry name" value="MULTICOPPER OXIDASE LPR1-LIKE"/>
    <property type="match status" value="1"/>
</dbReference>
<dbReference type="Pfam" id="PF00394">
    <property type="entry name" value="Cu-oxidase"/>
    <property type="match status" value="1"/>
</dbReference>
<dbReference type="Pfam" id="PF07731">
    <property type="entry name" value="Cu-oxidase_2"/>
    <property type="match status" value="1"/>
</dbReference>
<dbReference type="Pfam" id="PF07732">
    <property type="entry name" value="Cu-oxidase_3"/>
    <property type="match status" value="1"/>
</dbReference>
<dbReference type="SUPFAM" id="SSF49503">
    <property type="entry name" value="Cupredoxins"/>
    <property type="match status" value="3"/>
</dbReference>
<dbReference type="PROSITE" id="PS00080">
    <property type="entry name" value="MULTICOPPER_OXIDASE2"/>
    <property type="match status" value="1"/>
</dbReference>
<organism>
    <name type="scientific">Oryza sativa subsp. japonica</name>
    <name type="common">Rice</name>
    <dbReference type="NCBI Taxonomy" id="39947"/>
    <lineage>
        <taxon>Eukaryota</taxon>
        <taxon>Viridiplantae</taxon>
        <taxon>Streptophyta</taxon>
        <taxon>Embryophyta</taxon>
        <taxon>Tracheophyta</taxon>
        <taxon>Spermatophyta</taxon>
        <taxon>Magnoliopsida</taxon>
        <taxon>Liliopsida</taxon>
        <taxon>Poales</taxon>
        <taxon>Poaceae</taxon>
        <taxon>BOP clade</taxon>
        <taxon>Oryzoideae</taxon>
        <taxon>Oryzeae</taxon>
        <taxon>Oryzinae</taxon>
        <taxon>Oryza</taxon>
        <taxon>Oryza sativa</taxon>
    </lineage>
</organism>
<name>LPR3_ORYSJ</name>
<sequence>MLNKSFAMYVYVQQFHRDMPPTPVFVYGQSLQTATFPGPTIVARYNVPLYVTWENHLPDAHILPWDPTVPTAIPKNGGVPTVVHLHGAAQAPDSDGHAFAWFTRDFAENGSTWTQKTYTYPNVQPAAGNIWYHDHALGLTRASLLAGLLAAYIVEWPELEMPFNLPSGEFDLHLVIADRKFNVDGTIFMDTVGAVPSVHPQWQPEYFGEVITVNGKAWPFQAVQRRRYRLRILNASNARYLNIRFSNGLPFTVIASDATYLSRPVTVSNLLLSPAEIFDVIVDFSLVVNPNATDIELLNSAPYPFPTGTPANATLDGKVMAFNVSAKWQVGDDMPMQEPENSTVVPEIGVPFAKVTALPPTMKTRYIVLYENMTSNDPNTAKTMNLYINGLRLEDPPTETPISGTTELWHVINLTPDNHPLHLHLAEFQAVQMLQLVDPDTFKSCMLKHNDTFACNLDQHAVGALQPVPEEEKTWKNVVKIPPAYVTSVVVAFRLVHNNMPYPFDATAAPGYVYHCHILDHEDNAMIRPLTLLP</sequence>
<reference key="1">
    <citation type="journal article" date="2002" name="Nature">
        <title>The genome sequence and structure of rice chromosome 1.</title>
        <authorList>
            <person name="Sasaki T."/>
            <person name="Matsumoto T."/>
            <person name="Yamamoto K."/>
            <person name="Sakata K."/>
            <person name="Baba T."/>
            <person name="Katayose Y."/>
            <person name="Wu J."/>
            <person name="Niimura Y."/>
            <person name="Cheng Z."/>
            <person name="Nagamura Y."/>
            <person name="Antonio B.A."/>
            <person name="Kanamori H."/>
            <person name="Hosokawa S."/>
            <person name="Masukawa M."/>
            <person name="Arikawa K."/>
            <person name="Chiden Y."/>
            <person name="Hayashi M."/>
            <person name="Okamoto M."/>
            <person name="Ando T."/>
            <person name="Aoki H."/>
            <person name="Arita K."/>
            <person name="Hamada M."/>
            <person name="Harada C."/>
            <person name="Hijishita S."/>
            <person name="Honda M."/>
            <person name="Ichikawa Y."/>
            <person name="Idonuma A."/>
            <person name="Iijima M."/>
            <person name="Ikeda M."/>
            <person name="Ikeno M."/>
            <person name="Ito S."/>
            <person name="Ito T."/>
            <person name="Ito Y."/>
            <person name="Ito Y."/>
            <person name="Iwabuchi A."/>
            <person name="Kamiya K."/>
            <person name="Karasawa W."/>
            <person name="Katagiri S."/>
            <person name="Kikuta A."/>
            <person name="Kobayashi N."/>
            <person name="Kono I."/>
            <person name="Machita K."/>
            <person name="Maehara T."/>
            <person name="Mizuno H."/>
            <person name="Mizubayashi T."/>
            <person name="Mukai Y."/>
            <person name="Nagasaki H."/>
            <person name="Nakashima M."/>
            <person name="Nakama Y."/>
            <person name="Nakamichi Y."/>
            <person name="Nakamura M."/>
            <person name="Namiki N."/>
            <person name="Negishi M."/>
            <person name="Ohta I."/>
            <person name="Ono N."/>
            <person name="Saji S."/>
            <person name="Sakai K."/>
            <person name="Shibata M."/>
            <person name="Shimokawa T."/>
            <person name="Shomura A."/>
            <person name="Song J."/>
            <person name="Takazaki Y."/>
            <person name="Terasawa K."/>
            <person name="Tsuji K."/>
            <person name="Waki K."/>
            <person name="Yamagata H."/>
            <person name="Yamane H."/>
            <person name="Yoshiki S."/>
            <person name="Yoshihara R."/>
            <person name="Yukawa K."/>
            <person name="Zhong H."/>
            <person name="Iwama H."/>
            <person name="Endo T."/>
            <person name="Ito H."/>
            <person name="Hahn J.H."/>
            <person name="Kim H.-I."/>
            <person name="Eun M.-Y."/>
            <person name="Yano M."/>
            <person name="Jiang J."/>
            <person name="Gojobori T."/>
        </authorList>
    </citation>
    <scope>NUCLEOTIDE SEQUENCE [LARGE SCALE GENOMIC DNA]</scope>
    <source>
        <strain>cv. Nipponbare</strain>
    </source>
</reference>
<reference key="2">
    <citation type="journal article" date="2005" name="Nature">
        <title>The map-based sequence of the rice genome.</title>
        <authorList>
            <consortium name="International rice genome sequencing project (IRGSP)"/>
        </authorList>
    </citation>
    <scope>NUCLEOTIDE SEQUENCE [LARGE SCALE GENOMIC DNA]</scope>
    <source>
        <strain>cv. Nipponbare</strain>
    </source>
</reference>
<reference key="3">
    <citation type="journal article" date="2008" name="Nucleic Acids Res.">
        <title>The rice annotation project database (RAP-DB): 2008 update.</title>
        <authorList>
            <consortium name="The rice annotation project (RAP)"/>
        </authorList>
    </citation>
    <scope>GENOME REANNOTATION</scope>
    <source>
        <strain>cv. Nipponbare</strain>
    </source>
</reference>
<reference key="4">
    <citation type="journal article" date="2013" name="Rice">
        <title>Improvement of the Oryza sativa Nipponbare reference genome using next generation sequence and optical map data.</title>
        <authorList>
            <person name="Kawahara Y."/>
            <person name="de la Bastide M."/>
            <person name="Hamilton J.P."/>
            <person name="Kanamori H."/>
            <person name="McCombie W.R."/>
            <person name="Ouyang S."/>
            <person name="Schwartz D.C."/>
            <person name="Tanaka T."/>
            <person name="Wu J."/>
            <person name="Zhou S."/>
            <person name="Childs K.L."/>
            <person name="Davidson R.M."/>
            <person name="Lin H."/>
            <person name="Quesada-Ocampo L."/>
            <person name="Vaillancourt B."/>
            <person name="Sakai H."/>
            <person name="Lee S.S."/>
            <person name="Kim J."/>
            <person name="Numa H."/>
            <person name="Itoh T."/>
            <person name="Buell C.R."/>
            <person name="Matsumoto T."/>
        </authorList>
    </citation>
    <scope>GENOME REANNOTATION</scope>
    <source>
        <strain>cv. Nipponbare</strain>
    </source>
</reference>
<reference key="5">
    <citation type="journal article" date="2016" name="BMC Plant Biol.">
        <title>Identification and expression analysis of OsLPR family revealed the potential roles of OsLPR3 and 5 in maintaining phosphate homeostasis in rice.</title>
        <authorList>
            <person name="Cao Y."/>
            <person name="Ai H."/>
            <person name="Jain A."/>
            <person name="Wu X."/>
            <person name="Zhang L."/>
            <person name="Pei W."/>
            <person name="Chen A."/>
            <person name="Xu G."/>
            <person name="Sun S."/>
        </authorList>
    </citation>
    <scope>FUNCTION</scope>
    <scope>TISSUE SPECIFICITY</scope>
    <scope>INDUCTION</scope>
    <scope>GENE FAMILY</scope>
    <scope>NOMENCLATURE</scope>
</reference>
<proteinExistence type="evidence at transcript level"/>
<comment type="function">
    <text evidence="8">Multicopper oxidase that may play a role in the maintenance of inorganic phosphate homeostasis.</text>
</comment>
<comment type="cofactor">
    <cofactor evidence="2">
        <name>Cu cation</name>
        <dbReference type="ChEBI" id="CHEBI:23378"/>
    </cofactor>
    <text evidence="2">Binds 4 Cu cations per monomer. The Cu cations are bound as 3 distinct Cu centers known as type 1 or blue, type 2 or normal, and type 3 or coupled binuclear.</text>
</comment>
<comment type="subcellular location">
    <subcellularLocation>
        <location evidence="1">Endoplasmic reticulum membrane</location>
        <topology evidence="1">Peripheral membrane protein</topology>
    </subcellularLocation>
</comment>
<comment type="tissue specificity">
    <text evidence="5">Expressed in roots and basal stems.</text>
</comment>
<comment type="induction">
    <text evidence="5">Induced by phosphate or potassium deficiency.</text>
</comment>
<comment type="similarity">
    <text evidence="7">Belongs to the multicopper oxidase family.</text>
</comment>
<comment type="sequence caution" evidence="7">
    <conflict type="erroneous initiation">
        <sequence resource="EMBL-CDS" id="BAD52544"/>
    </conflict>
    <text>Truncated N-terminus.</text>
</comment>
<comment type="sequence caution" evidence="7">
    <conflict type="erroneous initiation">
        <sequence resource="EMBL-CDS" id="BAF03814"/>
    </conflict>
    <text>Truncated N-terminus.</text>
</comment>
<comment type="sequence caution" evidence="7">
    <conflict type="erroneous initiation">
        <sequence resource="EMBL-CDS" id="BAS70180"/>
    </conflict>
    <text>Truncated N-terminus.</text>
</comment>